<proteinExistence type="inferred from homology"/>
<comment type="function">
    <text evidence="1">Involved in the heme biosynthesis. Catalyzes the aerobic oxidative decarboxylation of propionate groups of rings A and B of coproporphyrinogen-III to yield the vinyl groups in protoporphyrinogen-IX.</text>
</comment>
<comment type="catalytic activity">
    <reaction evidence="1">
        <text>coproporphyrinogen III + O2 + 2 H(+) = protoporphyrinogen IX + 2 CO2 + 2 H2O</text>
        <dbReference type="Rhea" id="RHEA:18257"/>
        <dbReference type="ChEBI" id="CHEBI:15377"/>
        <dbReference type="ChEBI" id="CHEBI:15378"/>
        <dbReference type="ChEBI" id="CHEBI:15379"/>
        <dbReference type="ChEBI" id="CHEBI:16526"/>
        <dbReference type="ChEBI" id="CHEBI:57307"/>
        <dbReference type="ChEBI" id="CHEBI:57309"/>
        <dbReference type="EC" id="1.3.3.3"/>
    </reaction>
</comment>
<comment type="cofactor">
    <cofactor evidence="1">
        <name>a divalent metal cation</name>
        <dbReference type="ChEBI" id="CHEBI:60240"/>
    </cofactor>
</comment>
<comment type="pathway">
    <text evidence="1">Porphyrin-containing compound metabolism; protoporphyrin-IX biosynthesis; protoporphyrinogen-IX from coproporphyrinogen-III (O2 route): step 1/1.</text>
</comment>
<comment type="subunit">
    <text evidence="1">Homodimer.</text>
</comment>
<comment type="subcellular location">
    <subcellularLocation>
        <location evidence="1">Cytoplasm</location>
    </subcellularLocation>
</comment>
<comment type="similarity">
    <text evidence="1">Belongs to the aerobic coproporphyrinogen-III oxidase family.</text>
</comment>
<sequence>MTTRTEAVKAYLLDLQDRICAALETEDGGARFIEDAWTRPAGGGGRTRVIGDGAVIEKGGVNFSHVFGSGLPPSASAHRPELAGRGFEALGVSLVIHPHNPHVPTSHANVRFFIAEKEGEEPVWWFGGGFDLTPYYGNIDDCVHWHRVAERACAPFGADVYPRYKAWCDSYFHIKHRNEPRGIGGLFFDDLNEWDFDTSFAFMRAIGDAYIEAYLPIVQRRKAAAYTAQQREFQEFRRGRYVEFNLVYDRGTLFGLQSGGRTESILMSLPPQVRWGYDWKAEPGSEEARLTEYFLQDRDWLAASN</sequence>
<name>HEM6_PSEF5</name>
<dbReference type="EC" id="1.3.3.3" evidence="1"/>
<dbReference type="EMBL" id="CP000076">
    <property type="protein sequence ID" value="AAY95445.1"/>
    <property type="molecule type" value="Genomic_DNA"/>
</dbReference>
<dbReference type="RefSeq" id="WP_011058416.1">
    <property type="nucleotide sequence ID" value="NC_004129.6"/>
</dbReference>
<dbReference type="SMR" id="Q4KKQ4"/>
<dbReference type="STRING" id="220664.PFL_0027"/>
<dbReference type="GeneID" id="57473000"/>
<dbReference type="KEGG" id="pfl:PFL_0027"/>
<dbReference type="PATRIC" id="fig|220664.5.peg.27"/>
<dbReference type="eggNOG" id="COG0408">
    <property type="taxonomic scope" value="Bacteria"/>
</dbReference>
<dbReference type="HOGENOM" id="CLU_026169_0_1_6"/>
<dbReference type="UniPathway" id="UPA00251">
    <property type="reaction ID" value="UER00322"/>
</dbReference>
<dbReference type="Proteomes" id="UP000008540">
    <property type="component" value="Chromosome"/>
</dbReference>
<dbReference type="GO" id="GO:0005737">
    <property type="term" value="C:cytoplasm"/>
    <property type="evidence" value="ECO:0007669"/>
    <property type="project" value="UniProtKB-SubCell"/>
</dbReference>
<dbReference type="GO" id="GO:0004109">
    <property type="term" value="F:coproporphyrinogen oxidase activity"/>
    <property type="evidence" value="ECO:0007669"/>
    <property type="project" value="UniProtKB-UniRule"/>
</dbReference>
<dbReference type="GO" id="GO:0046872">
    <property type="term" value="F:metal ion binding"/>
    <property type="evidence" value="ECO:0007669"/>
    <property type="project" value="UniProtKB-KW"/>
</dbReference>
<dbReference type="GO" id="GO:0042803">
    <property type="term" value="F:protein homodimerization activity"/>
    <property type="evidence" value="ECO:0000250"/>
    <property type="project" value="UniProtKB"/>
</dbReference>
<dbReference type="GO" id="GO:0006782">
    <property type="term" value="P:protoporphyrinogen IX biosynthetic process"/>
    <property type="evidence" value="ECO:0007669"/>
    <property type="project" value="UniProtKB-UniRule"/>
</dbReference>
<dbReference type="FunFam" id="3.40.1500.10:FF:000001">
    <property type="entry name" value="Oxygen-dependent coproporphyrinogen-III oxidase"/>
    <property type="match status" value="1"/>
</dbReference>
<dbReference type="Gene3D" id="3.40.1500.10">
    <property type="entry name" value="Coproporphyrinogen III oxidase, aerobic"/>
    <property type="match status" value="1"/>
</dbReference>
<dbReference type="HAMAP" id="MF_00333">
    <property type="entry name" value="Coprogen_oxidas"/>
    <property type="match status" value="1"/>
</dbReference>
<dbReference type="InterPro" id="IPR001260">
    <property type="entry name" value="Coprogen_oxidase_aer"/>
</dbReference>
<dbReference type="InterPro" id="IPR036406">
    <property type="entry name" value="Coprogen_oxidase_aer_sf"/>
</dbReference>
<dbReference type="InterPro" id="IPR018375">
    <property type="entry name" value="Coprogen_oxidase_CS"/>
</dbReference>
<dbReference type="NCBIfam" id="NF003727">
    <property type="entry name" value="PRK05330.1"/>
    <property type="match status" value="1"/>
</dbReference>
<dbReference type="PANTHER" id="PTHR10755">
    <property type="entry name" value="COPROPORPHYRINOGEN III OXIDASE, MITOCHONDRIAL"/>
    <property type="match status" value="1"/>
</dbReference>
<dbReference type="PANTHER" id="PTHR10755:SF0">
    <property type="entry name" value="OXYGEN-DEPENDENT COPROPORPHYRINOGEN-III OXIDASE, MITOCHONDRIAL"/>
    <property type="match status" value="1"/>
</dbReference>
<dbReference type="Pfam" id="PF01218">
    <property type="entry name" value="Coprogen_oxidas"/>
    <property type="match status" value="1"/>
</dbReference>
<dbReference type="PIRSF" id="PIRSF000166">
    <property type="entry name" value="Coproporphyri_ox"/>
    <property type="match status" value="1"/>
</dbReference>
<dbReference type="PRINTS" id="PR00073">
    <property type="entry name" value="COPRGNOXDASE"/>
</dbReference>
<dbReference type="SUPFAM" id="SSF102886">
    <property type="entry name" value="Coproporphyrinogen III oxidase"/>
    <property type="match status" value="1"/>
</dbReference>
<dbReference type="PROSITE" id="PS01021">
    <property type="entry name" value="COPROGEN_OXIDASE"/>
    <property type="match status" value="1"/>
</dbReference>
<accession>Q4KKQ4</accession>
<evidence type="ECO:0000255" key="1">
    <source>
        <dbReference type="HAMAP-Rule" id="MF_00333"/>
    </source>
</evidence>
<protein>
    <recommendedName>
        <fullName evidence="1">Oxygen-dependent coproporphyrinogen-III oxidase</fullName>
        <shortName evidence="1">CPO</shortName>
        <shortName evidence="1">Coprogen oxidase</shortName>
        <shortName evidence="1">Coproporphyrinogenase</shortName>
        <ecNumber evidence="1">1.3.3.3</ecNumber>
    </recommendedName>
</protein>
<organism>
    <name type="scientific">Pseudomonas fluorescens (strain ATCC BAA-477 / NRRL B-23932 / Pf-5)</name>
    <dbReference type="NCBI Taxonomy" id="220664"/>
    <lineage>
        <taxon>Bacteria</taxon>
        <taxon>Pseudomonadati</taxon>
        <taxon>Pseudomonadota</taxon>
        <taxon>Gammaproteobacteria</taxon>
        <taxon>Pseudomonadales</taxon>
        <taxon>Pseudomonadaceae</taxon>
        <taxon>Pseudomonas</taxon>
    </lineage>
</organism>
<feature type="chain" id="PRO_1000019486" description="Oxygen-dependent coproporphyrinogen-III oxidase">
    <location>
        <begin position="1"/>
        <end position="305"/>
    </location>
</feature>
<feature type="region of interest" description="Important for dimerization" evidence="1">
    <location>
        <begin position="241"/>
        <end position="276"/>
    </location>
</feature>
<feature type="active site" description="Proton donor" evidence="1">
    <location>
        <position position="107"/>
    </location>
</feature>
<feature type="binding site" evidence="1">
    <location>
        <position position="93"/>
    </location>
    <ligand>
        <name>substrate</name>
    </ligand>
</feature>
<feature type="binding site" evidence="1">
    <location>
        <position position="97"/>
    </location>
    <ligand>
        <name>a divalent metal cation</name>
        <dbReference type="ChEBI" id="CHEBI:60240"/>
    </ligand>
</feature>
<feature type="binding site" evidence="1">
    <location>
        <position position="107"/>
    </location>
    <ligand>
        <name>a divalent metal cation</name>
        <dbReference type="ChEBI" id="CHEBI:60240"/>
    </ligand>
</feature>
<feature type="binding site" evidence="1">
    <location>
        <begin position="109"/>
        <end position="111"/>
    </location>
    <ligand>
        <name>substrate</name>
    </ligand>
</feature>
<feature type="binding site" evidence="1">
    <location>
        <position position="146"/>
    </location>
    <ligand>
        <name>a divalent metal cation</name>
        <dbReference type="ChEBI" id="CHEBI:60240"/>
    </ligand>
</feature>
<feature type="binding site" evidence="1">
    <location>
        <position position="176"/>
    </location>
    <ligand>
        <name>a divalent metal cation</name>
        <dbReference type="ChEBI" id="CHEBI:60240"/>
    </ligand>
</feature>
<feature type="binding site" evidence="1">
    <location>
        <begin position="259"/>
        <end position="261"/>
    </location>
    <ligand>
        <name>substrate</name>
    </ligand>
</feature>
<feature type="site" description="Important for dimerization" evidence="1">
    <location>
        <position position="176"/>
    </location>
</feature>
<reference key="1">
    <citation type="journal article" date="2005" name="Nat. Biotechnol.">
        <title>Complete genome sequence of the plant commensal Pseudomonas fluorescens Pf-5.</title>
        <authorList>
            <person name="Paulsen I.T."/>
            <person name="Press C.M."/>
            <person name="Ravel J."/>
            <person name="Kobayashi D.Y."/>
            <person name="Myers G.S.A."/>
            <person name="Mavrodi D.V."/>
            <person name="DeBoy R.T."/>
            <person name="Seshadri R."/>
            <person name="Ren Q."/>
            <person name="Madupu R."/>
            <person name="Dodson R.J."/>
            <person name="Durkin A.S."/>
            <person name="Brinkac L.M."/>
            <person name="Daugherty S.C."/>
            <person name="Sullivan S.A."/>
            <person name="Rosovitz M.J."/>
            <person name="Gwinn M.L."/>
            <person name="Zhou L."/>
            <person name="Schneider D.J."/>
            <person name="Cartinhour S.W."/>
            <person name="Nelson W.C."/>
            <person name="Weidman J."/>
            <person name="Watkins K."/>
            <person name="Tran K."/>
            <person name="Khouri H."/>
            <person name="Pierson E.A."/>
            <person name="Pierson L.S. III"/>
            <person name="Thomashow L.S."/>
            <person name="Loper J.E."/>
        </authorList>
    </citation>
    <scope>NUCLEOTIDE SEQUENCE [LARGE SCALE GENOMIC DNA]</scope>
    <source>
        <strain>ATCC BAA-477 / NRRL B-23932 / Pf-5</strain>
    </source>
</reference>
<keyword id="KW-0963">Cytoplasm</keyword>
<keyword id="KW-0350">Heme biosynthesis</keyword>
<keyword id="KW-0479">Metal-binding</keyword>
<keyword id="KW-0560">Oxidoreductase</keyword>
<keyword id="KW-0627">Porphyrin biosynthesis</keyword>
<gene>
    <name evidence="1" type="primary">hemF</name>
    <name type="ordered locus">PFL_0027</name>
</gene>